<feature type="signal peptide" evidence="3">
    <location>
        <begin position="1"/>
        <end position="21"/>
    </location>
</feature>
<feature type="chain" id="PRO_5014587745" description="Long form salivary protein D7L1" evidence="3">
    <location>
        <begin position="22"/>
        <end position="311"/>
    </location>
</feature>
<feature type="disulfide bond" evidence="2">
    <location>
        <begin position="37"/>
        <end position="73"/>
    </location>
</feature>
<feature type="disulfide bond" evidence="2">
    <location>
        <begin position="69"/>
        <end position="128"/>
    </location>
</feature>
<feature type="disulfide bond" evidence="2">
    <location>
        <begin position="178"/>
        <end position="211"/>
    </location>
</feature>
<feature type="disulfide bond" evidence="2">
    <location>
        <begin position="252"/>
        <end position="263"/>
    </location>
</feature>
<name>D7L1_ANOGA</name>
<accession>Q7PJ76</accession>
<sequence length="311" mass="35575">MIVTGVLLFILLELFAQGSQAFKALDPEEAWYVYERCHEDHLPSGPNRETYLKTWKFWKLEPNDAVTHCYVKCTLAGLQMYDEKTNTFKPETVPVQHEAYKSFTEVESSKVNELQQALSSLNAGSGSCAEVFNAYLPVHNKYVGVSRKIYHGTVDSVAKIYEAKPEIKKQEESFFAYCAKKALGANGKEGYTKLRDYELADSAEFRNAMDCVFRGFRYMDDSGLKVDEVVRDFNLINKSDLEPEVRSVLASCTGTQAYDYYSCLLNSPVKEDFRNAFYFHELRSANYGYLAMGKVYEGPEKVKEELKKLNY</sequence>
<dbReference type="EMBL" id="AAAB01008964">
    <property type="protein sequence ID" value="EAA43866.1"/>
    <property type="molecule type" value="Genomic_DNA"/>
</dbReference>
<dbReference type="RefSeq" id="XP_317191.1">
    <property type="nucleotide sequence ID" value="XM_317191.4"/>
</dbReference>
<dbReference type="SMR" id="Q7PJ76"/>
<dbReference type="STRING" id="7165.AGAP008278-PA"/>
<dbReference type="PaxDb" id="7165-AGAP008278-PA"/>
<dbReference type="EnsemblMetazoa" id="AGAP008278-RA">
    <property type="protein sequence ID" value="AGAP008278-PA"/>
    <property type="gene ID" value="AGAP008278"/>
</dbReference>
<dbReference type="GeneID" id="4578091"/>
<dbReference type="KEGG" id="aga:4578091"/>
<dbReference type="VEuPathDB" id="VectorBase:AGAMI1_013945"/>
<dbReference type="VEuPathDB" id="VectorBase:AGAP008278"/>
<dbReference type="eggNOG" id="ENOG502T82F">
    <property type="taxonomic scope" value="Eukaryota"/>
</dbReference>
<dbReference type="HOGENOM" id="CLU_077766_0_0_1"/>
<dbReference type="InParanoid" id="Q7PJ76"/>
<dbReference type="OMA" id="YERCHED"/>
<dbReference type="Proteomes" id="UP000007062">
    <property type="component" value="Chromosome 3R"/>
</dbReference>
<dbReference type="GO" id="GO:0005615">
    <property type="term" value="C:extracellular space"/>
    <property type="evidence" value="ECO:0000318"/>
    <property type="project" value="GO_Central"/>
</dbReference>
<dbReference type="GO" id="GO:0005549">
    <property type="term" value="F:odorant binding"/>
    <property type="evidence" value="ECO:0007669"/>
    <property type="project" value="InterPro"/>
</dbReference>
<dbReference type="GO" id="GO:0090729">
    <property type="term" value="F:toxin activity"/>
    <property type="evidence" value="ECO:0007669"/>
    <property type="project" value="UniProtKB-KW"/>
</dbReference>
<dbReference type="GO" id="GO:0007608">
    <property type="term" value="P:sensory perception of smell"/>
    <property type="evidence" value="ECO:0000318"/>
    <property type="project" value="GO_Central"/>
</dbReference>
<dbReference type="GO" id="GO:0042311">
    <property type="term" value="P:vasodilation"/>
    <property type="evidence" value="ECO:0007669"/>
    <property type="project" value="UniProtKB-KW"/>
</dbReference>
<dbReference type="CDD" id="cd23992">
    <property type="entry name" value="PBP_GOBP"/>
    <property type="match status" value="1"/>
</dbReference>
<dbReference type="Gene3D" id="1.10.238.20">
    <property type="entry name" value="Pheromone/general odorant binding protein domain"/>
    <property type="match status" value="2"/>
</dbReference>
<dbReference type="InterPro" id="IPR006170">
    <property type="entry name" value="PBP/GOBP"/>
</dbReference>
<dbReference type="InterPro" id="IPR036728">
    <property type="entry name" value="PBP_GOBP_sf"/>
</dbReference>
<dbReference type="PANTHER" id="PTHR11857:SF43">
    <property type="entry name" value="GEO07291P1-RELATED"/>
    <property type="match status" value="1"/>
</dbReference>
<dbReference type="PANTHER" id="PTHR11857">
    <property type="entry name" value="ODORANT BINDING PROTEIN-RELATED"/>
    <property type="match status" value="1"/>
</dbReference>
<dbReference type="Pfam" id="PF01395">
    <property type="entry name" value="PBP_GOBP"/>
    <property type="match status" value="1"/>
</dbReference>
<dbReference type="SUPFAM" id="SSF47565">
    <property type="entry name" value="Insect pheromone/odorant-binding proteins"/>
    <property type="match status" value="2"/>
</dbReference>
<organism evidence="7">
    <name type="scientific">Anopheles gambiae</name>
    <name type="common">African malaria mosquito</name>
    <dbReference type="NCBI Taxonomy" id="7165"/>
    <lineage>
        <taxon>Eukaryota</taxon>
        <taxon>Metazoa</taxon>
        <taxon>Ecdysozoa</taxon>
        <taxon>Arthropoda</taxon>
        <taxon>Hexapoda</taxon>
        <taxon>Insecta</taxon>
        <taxon>Pterygota</taxon>
        <taxon>Neoptera</taxon>
        <taxon>Endopterygota</taxon>
        <taxon>Diptera</taxon>
        <taxon>Nematocera</taxon>
        <taxon>Culicoidea</taxon>
        <taxon>Culicidae</taxon>
        <taxon>Anophelinae</taxon>
        <taxon>Anopheles</taxon>
    </lineage>
</organism>
<evidence type="ECO:0000250" key="1">
    <source>
        <dbReference type="UniProtKB" id="P18153"/>
    </source>
</evidence>
<evidence type="ECO:0000250" key="2">
    <source>
        <dbReference type="UniProtKB" id="Q95NY5"/>
    </source>
</evidence>
<evidence type="ECO:0000255" key="3"/>
<evidence type="ECO:0000269" key="4">
    <source>
    </source>
</evidence>
<evidence type="ECO:0000303" key="5">
    <source>
    </source>
</evidence>
<evidence type="ECO:0000305" key="6"/>
<evidence type="ECO:0000312" key="7">
    <source>
        <dbReference type="EMBL" id="EAA43866.1"/>
    </source>
</evidence>
<evidence type="ECO:0000312" key="8">
    <source>
        <dbReference type="Proteomes" id="UP000007062"/>
    </source>
</evidence>
<keyword id="KW-1015">Disulfide bond</keyword>
<keyword id="KW-1199">Hemostasis impairing toxin</keyword>
<keyword id="KW-1201">Platelet aggregation inhibiting toxin</keyword>
<keyword id="KW-1185">Reference proteome</keyword>
<keyword id="KW-0964">Secreted</keyword>
<keyword id="KW-0732">Signal</keyword>
<keyword id="KW-0800">Toxin</keyword>
<keyword id="KW-0838">Vasoactive</keyword>
<keyword id="KW-0840">Vasodilator</keyword>
<reference evidence="8" key="1">
    <citation type="journal article" date="2002" name="Science">
        <title>The genome sequence of the malaria mosquito Anopheles gambiae.</title>
        <authorList>
            <person name="Holt R.A."/>
            <person name="Subramanian G.M."/>
            <person name="Halpern A."/>
            <person name="Sutton G.G."/>
            <person name="Charlab R."/>
            <person name="Nusskern D.R."/>
            <person name="Wincker P."/>
            <person name="Clark A.G."/>
            <person name="Ribeiro J.M.C."/>
            <person name="Wides R."/>
            <person name="Salzberg S.L."/>
            <person name="Loftus B.J."/>
            <person name="Yandell M.D."/>
            <person name="Majoros W.H."/>
            <person name="Rusch D.B."/>
            <person name="Lai Z."/>
            <person name="Kraft C.L."/>
            <person name="Abril J.F."/>
            <person name="Anthouard V."/>
            <person name="Arensburger P."/>
            <person name="Atkinson P.W."/>
            <person name="Baden H."/>
            <person name="de Berardinis V."/>
            <person name="Baldwin D."/>
            <person name="Benes V."/>
            <person name="Biedler J."/>
            <person name="Blass C."/>
            <person name="Bolanos R."/>
            <person name="Boscus D."/>
            <person name="Barnstead M."/>
            <person name="Cai S."/>
            <person name="Center A."/>
            <person name="Chaturverdi K."/>
            <person name="Christophides G.K."/>
            <person name="Chrystal M.A.M."/>
            <person name="Clamp M."/>
            <person name="Cravchik A."/>
            <person name="Curwen V."/>
            <person name="Dana A."/>
            <person name="Delcher A."/>
            <person name="Dew I."/>
            <person name="Evans C.A."/>
            <person name="Flanigan M."/>
            <person name="Grundschober-Freimoser A."/>
            <person name="Friedli L."/>
            <person name="Gu Z."/>
            <person name="Guan P."/>
            <person name="Guigo R."/>
            <person name="Hillenmeyer M.E."/>
            <person name="Hladun S.L."/>
            <person name="Hogan J.R."/>
            <person name="Hong Y.S."/>
            <person name="Hoover J."/>
            <person name="Jaillon O."/>
            <person name="Ke Z."/>
            <person name="Kodira C.D."/>
            <person name="Kokoza E."/>
            <person name="Koutsos A."/>
            <person name="Letunic I."/>
            <person name="Levitsky A.A."/>
            <person name="Liang Y."/>
            <person name="Lin J.-J."/>
            <person name="Lobo N.F."/>
            <person name="Lopez J.R."/>
            <person name="Malek J.A."/>
            <person name="McIntosh T.C."/>
            <person name="Meister S."/>
            <person name="Miller J.R."/>
            <person name="Mobarry C."/>
            <person name="Mongin E."/>
            <person name="Murphy S.D."/>
            <person name="O'Brochta D.A."/>
            <person name="Pfannkoch C."/>
            <person name="Qi R."/>
            <person name="Regier M.A."/>
            <person name="Remington K."/>
            <person name="Shao H."/>
            <person name="Sharakhova M.V."/>
            <person name="Sitter C.D."/>
            <person name="Shetty J."/>
            <person name="Smith T.J."/>
            <person name="Strong R."/>
            <person name="Sun J."/>
            <person name="Thomasova D."/>
            <person name="Ton L.Q."/>
            <person name="Topalis P."/>
            <person name="Tu Z.J."/>
            <person name="Unger M.F."/>
            <person name="Walenz B."/>
            <person name="Wang A.H."/>
            <person name="Wang J."/>
            <person name="Wang M."/>
            <person name="Wang X."/>
            <person name="Woodford K.J."/>
            <person name="Wortman J.R."/>
            <person name="Wu M."/>
            <person name="Yao A."/>
            <person name="Zdobnov E.M."/>
            <person name="Zhang H."/>
            <person name="Zhao Q."/>
            <person name="Zhao S."/>
            <person name="Zhu S.C."/>
            <person name="Zhimulev I."/>
            <person name="Coluzzi M."/>
            <person name="della Torre A."/>
            <person name="Roth C.W."/>
            <person name="Louis C."/>
            <person name="Kalush F."/>
            <person name="Mural R.J."/>
            <person name="Myers E.W."/>
            <person name="Adams M.D."/>
            <person name="Smith H.O."/>
            <person name="Broder S."/>
            <person name="Gardner M.J."/>
            <person name="Fraser C.M."/>
            <person name="Birney E."/>
            <person name="Bork P."/>
            <person name="Brey P.T."/>
            <person name="Venter J.C."/>
            <person name="Weissenbach J."/>
            <person name="Kafatos F.C."/>
            <person name="Collins F.H."/>
            <person name="Hoffman S.L."/>
        </authorList>
    </citation>
    <scope>NUCLEOTIDE SEQUENCE [LARGE SCALE GENOMIC DNA]</scope>
    <source>
        <strain evidence="8">PEST</strain>
    </source>
</reference>
<reference evidence="6" key="2">
    <citation type="journal article" date="2022" name="J. Biol. Chem.">
        <title>Novel salivary antihemostatic activities of long-form D7 proteins from the malaria vector Anopheles gambiae facilitate hematophagy.</title>
        <authorList>
            <person name="Smith L.B."/>
            <person name="Duge E."/>
            <person name="Valenzuela-Leon P.C."/>
            <person name="Brooks S."/>
            <person name="Martin-Martin I."/>
            <person name="Ackerman H."/>
            <person name="Calvo E."/>
        </authorList>
    </citation>
    <scope>FUNCTION</scope>
</reference>
<comment type="function">
    <text evidence="1 4">Modulates blood feeding of female mosquitoes on vertebrate species by binding and sequestering different mediators involved in the host response (By similarity). Binds leukotriene C4 and U-46619, a stable analog of thromboxane A2 (PubMed:35460690). Inhibits agonist-induced platelet aggregation (PubMed:35460690). Exhibits vasodilating activity (PubMed:35460690).</text>
</comment>
<comment type="subcellular location">
    <subcellularLocation>
        <location evidence="1">Secreted</location>
    </subcellularLocation>
</comment>
<comment type="similarity">
    <text evidence="6">Belongs to the PBP/GOBP family.</text>
</comment>
<protein>
    <recommendedName>
        <fullName evidence="6">Long form salivary protein D7L1</fullName>
        <shortName evidence="5">AngaD7L1</shortName>
    </recommendedName>
</protein>
<proteinExistence type="inferred from homology"/>
<gene>
    <name evidence="6" type="primary">D7L1</name>
    <name evidence="7" type="ORF">AgaP_AGAP008278</name>
</gene>